<reference key="1">
    <citation type="journal article" date="2002" name="Science">
        <title>50 million years of genomic stasis in endosymbiotic bacteria.</title>
        <authorList>
            <person name="Tamas I."/>
            <person name="Klasson L."/>
            <person name="Canbaeck B."/>
            <person name="Naeslund A.K."/>
            <person name="Eriksson A.-S."/>
            <person name="Wernegreen J.J."/>
            <person name="Sandstroem J.P."/>
            <person name="Moran N.A."/>
            <person name="Andersson S.G.E."/>
        </authorList>
    </citation>
    <scope>NUCLEOTIDE SEQUENCE [LARGE SCALE GENOMIC DNA]</scope>
    <source>
        <strain>Sg</strain>
    </source>
</reference>
<protein>
    <recommendedName>
        <fullName evidence="1">Argininosuccinate lyase</fullName>
        <shortName evidence="1">ASAL</shortName>
        <ecNumber evidence="1">4.3.2.1</ecNumber>
    </recommendedName>
    <alternativeName>
        <fullName evidence="1">Arginosuccinase</fullName>
    </alternativeName>
</protein>
<feature type="chain" id="PRO_0000137749" description="Argininosuccinate lyase">
    <location>
        <begin position="1"/>
        <end position="459"/>
    </location>
</feature>
<dbReference type="EC" id="4.3.2.1" evidence="1"/>
<dbReference type="EMBL" id="AE013218">
    <property type="protein sequence ID" value="AAM67619.1"/>
    <property type="molecule type" value="Genomic_DNA"/>
</dbReference>
<dbReference type="RefSeq" id="WP_011053585.1">
    <property type="nucleotide sequence ID" value="NC_004061.1"/>
</dbReference>
<dbReference type="SMR" id="Q8KA59"/>
<dbReference type="STRING" id="198804.BUsg_048"/>
<dbReference type="GeneID" id="93003515"/>
<dbReference type="KEGG" id="bas:BUsg_048"/>
<dbReference type="eggNOG" id="COG0165">
    <property type="taxonomic scope" value="Bacteria"/>
</dbReference>
<dbReference type="HOGENOM" id="CLU_027272_2_3_6"/>
<dbReference type="UniPathway" id="UPA00068">
    <property type="reaction ID" value="UER00114"/>
</dbReference>
<dbReference type="Proteomes" id="UP000000416">
    <property type="component" value="Chromosome"/>
</dbReference>
<dbReference type="GO" id="GO:0005829">
    <property type="term" value="C:cytosol"/>
    <property type="evidence" value="ECO:0007669"/>
    <property type="project" value="TreeGrafter"/>
</dbReference>
<dbReference type="GO" id="GO:0004056">
    <property type="term" value="F:argininosuccinate lyase activity"/>
    <property type="evidence" value="ECO:0007669"/>
    <property type="project" value="UniProtKB-UniRule"/>
</dbReference>
<dbReference type="GO" id="GO:0042450">
    <property type="term" value="P:arginine biosynthetic process via ornithine"/>
    <property type="evidence" value="ECO:0007669"/>
    <property type="project" value="InterPro"/>
</dbReference>
<dbReference type="GO" id="GO:0006526">
    <property type="term" value="P:L-arginine biosynthetic process"/>
    <property type="evidence" value="ECO:0007669"/>
    <property type="project" value="UniProtKB-UniRule"/>
</dbReference>
<dbReference type="CDD" id="cd01359">
    <property type="entry name" value="Argininosuccinate_lyase"/>
    <property type="match status" value="1"/>
</dbReference>
<dbReference type="FunFam" id="1.10.40.30:FF:000001">
    <property type="entry name" value="Argininosuccinate lyase"/>
    <property type="match status" value="1"/>
</dbReference>
<dbReference type="FunFam" id="1.20.200.10:FF:000006">
    <property type="entry name" value="Argininosuccinate lyase"/>
    <property type="match status" value="1"/>
</dbReference>
<dbReference type="Gene3D" id="1.10.40.30">
    <property type="entry name" value="Fumarase/aspartase (C-terminal domain)"/>
    <property type="match status" value="1"/>
</dbReference>
<dbReference type="Gene3D" id="1.20.200.10">
    <property type="entry name" value="Fumarase/aspartase (Central domain)"/>
    <property type="match status" value="1"/>
</dbReference>
<dbReference type="Gene3D" id="1.10.275.10">
    <property type="entry name" value="Fumarase/aspartase (N-terminal domain)"/>
    <property type="match status" value="1"/>
</dbReference>
<dbReference type="HAMAP" id="MF_00006">
    <property type="entry name" value="Arg_succ_lyase"/>
    <property type="match status" value="1"/>
</dbReference>
<dbReference type="InterPro" id="IPR029419">
    <property type="entry name" value="Arg_succ_lyase_C"/>
</dbReference>
<dbReference type="InterPro" id="IPR009049">
    <property type="entry name" value="Argininosuccinate_lyase"/>
</dbReference>
<dbReference type="InterPro" id="IPR024083">
    <property type="entry name" value="Fumarase/histidase_N"/>
</dbReference>
<dbReference type="InterPro" id="IPR020557">
    <property type="entry name" value="Fumarate_lyase_CS"/>
</dbReference>
<dbReference type="InterPro" id="IPR000362">
    <property type="entry name" value="Fumarate_lyase_fam"/>
</dbReference>
<dbReference type="InterPro" id="IPR022761">
    <property type="entry name" value="Fumarate_lyase_N"/>
</dbReference>
<dbReference type="InterPro" id="IPR008948">
    <property type="entry name" value="L-Aspartase-like"/>
</dbReference>
<dbReference type="NCBIfam" id="TIGR00838">
    <property type="entry name" value="argH"/>
    <property type="match status" value="1"/>
</dbReference>
<dbReference type="NCBIfam" id="NF008964">
    <property type="entry name" value="PRK12308.1"/>
    <property type="match status" value="1"/>
</dbReference>
<dbReference type="PANTHER" id="PTHR43814">
    <property type="entry name" value="ARGININOSUCCINATE LYASE"/>
    <property type="match status" value="1"/>
</dbReference>
<dbReference type="PANTHER" id="PTHR43814:SF1">
    <property type="entry name" value="ARGININOSUCCINATE LYASE"/>
    <property type="match status" value="1"/>
</dbReference>
<dbReference type="Pfam" id="PF14698">
    <property type="entry name" value="ASL_C2"/>
    <property type="match status" value="1"/>
</dbReference>
<dbReference type="Pfam" id="PF00206">
    <property type="entry name" value="Lyase_1"/>
    <property type="match status" value="1"/>
</dbReference>
<dbReference type="PRINTS" id="PR00145">
    <property type="entry name" value="ARGSUCLYASE"/>
</dbReference>
<dbReference type="PRINTS" id="PR00149">
    <property type="entry name" value="FUMRATELYASE"/>
</dbReference>
<dbReference type="SUPFAM" id="SSF48557">
    <property type="entry name" value="L-aspartase-like"/>
    <property type="match status" value="1"/>
</dbReference>
<dbReference type="PROSITE" id="PS00163">
    <property type="entry name" value="FUMARATE_LYASES"/>
    <property type="match status" value="1"/>
</dbReference>
<gene>
    <name evidence="1" type="primary">argH</name>
    <name type="ordered locus">BUsg_048</name>
</gene>
<comment type="catalytic activity">
    <reaction evidence="1">
        <text>2-(N(omega)-L-arginino)succinate = fumarate + L-arginine</text>
        <dbReference type="Rhea" id="RHEA:24020"/>
        <dbReference type="ChEBI" id="CHEBI:29806"/>
        <dbReference type="ChEBI" id="CHEBI:32682"/>
        <dbReference type="ChEBI" id="CHEBI:57472"/>
        <dbReference type="EC" id="4.3.2.1"/>
    </reaction>
</comment>
<comment type="pathway">
    <text evidence="1">Amino-acid biosynthesis; L-arginine biosynthesis; L-arginine from L-ornithine and carbamoyl phosphate: step 3/3.</text>
</comment>
<comment type="subcellular location">
    <subcellularLocation>
        <location evidence="1">Cytoplasm</location>
    </subcellularLocation>
</comment>
<comment type="similarity">
    <text evidence="1">Belongs to the lyase 1 family. Argininosuccinate lyase subfamily.</text>
</comment>
<proteinExistence type="inferred from homology"/>
<keyword id="KW-0028">Amino-acid biosynthesis</keyword>
<keyword id="KW-0055">Arginine biosynthesis</keyword>
<keyword id="KW-0963">Cytoplasm</keyword>
<keyword id="KW-0456">Lyase</keyword>
<name>ARLY_BUCAP</name>
<sequence>MSLWGGRFLDESNETFKKFNASLPFDYILVKEDIFASIAWSKSLVEVGVLTQEEQKKIESALISLKEEIYNNSKKILESDYEDIHSWIEANLIKKIGELGKKLHTGRSRNDQITTDLKLWCKRKIFVLLDSIINLQKNFIFVAELNDDVIMPGYTHLQRAQPITFSYWCLAYVQMFKRDVSRLKDILKRLDISPLGSGALSGTAWNINRKKLAISMGFSSETNNALDSVSDRDYLIELLSASSISMTHLSRFSEDLIFFNSSEANFIELSDSITSGSSLMPQKKNPDALELIRAKCGRVHGALVSILVVLKSLPLSYNKDLQEDKEGLFDSLKTWNDSLLIASLVLKNIKLNRLSCRKAAEKGYSNATEIADYLVKKGMTFREAHHVSGKLVLRAIKENKSLNDLDLSIFQSYSALITDDIYKNITLEACLEKRSSKGGVAPNEIRKEIFKEKERLNIL</sequence>
<evidence type="ECO:0000255" key="1">
    <source>
        <dbReference type="HAMAP-Rule" id="MF_00006"/>
    </source>
</evidence>
<organism>
    <name type="scientific">Buchnera aphidicola subsp. Schizaphis graminum (strain Sg)</name>
    <dbReference type="NCBI Taxonomy" id="198804"/>
    <lineage>
        <taxon>Bacteria</taxon>
        <taxon>Pseudomonadati</taxon>
        <taxon>Pseudomonadota</taxon>
        <taxon>Gammaproteobacteria</taxon>
        <taxon>Enterobacterales</taxon>
        <taxon>Erwiniaceae</taxon>
        <taxon>Buchnera</taxon>
    </lineage>
</organism>
<accession>Q8KA59</accession>